<organism>
    <name type="scientific">Bordetella petrii (strain ATCC BAA-461 / DSM 12804 / CCUG 43448)</name>
    <dbReference type="NCBI Taxonomy" id="340100"/>
    <lineage>
        <taxon>Bacteria</taxon>
        <taxon>Pseudomonadati</taxon>
        <taxon>Pseudomonadota</taxon>
        <taxon>Betaproteobacteria</taxon>
        <taxon>Burkholderiales</taxon>
        <taxon>Alcaligenaceae</taxon>
        <taxon>Bordetella</taxon>
    </lineage>
</organism>
<keyword id="KW-0687">Ribonucleoprotein</keyword>
<keyword id="KW-0689">Ribosomal protein</keyword>
<keyword id="KW-0694">RNA-binding</keyword>
<keyword id="KW-0699">rRNA-binding</keyword>
<gene>
    <name evidence="1" type="primary">rpsH</name>
    <name type="ordered locus">Bpet4936</name>
</gene>
<sequence length="131" mass="14242">MSMSDPIADMLTRIRNAQQVDKVTVSMPSSKLKAAIAAVLQDEGYIDGFEVKGTQAKPELEITLKYYAGRPVIERIERVSRPGLRIYKGRSNIPQVMNGLGVAIVSTSRGVMTDRKARANGVGGEVLCYVA</sequence>
<evidence type="ECO:0000255" key="1">
    <source>
        <dbReference type="HAMAP-Rule" id="MF_01302"/>
    </source>
</evidence>
<evidence type="ECO:0000305" key="2"/>
<protein>
    <recommendedName>
        <fullName evidence="1">Small ribosomal subunit protein uS8</fullName>
    </recommendedName>
    <alternativeName>
        <fullName evidence="2">30S ribosomal protein S8</fullName>
    </alternativeName>
</protein>
<reference key="1">
    <citation type="journal article" date="2008" name="BMC Genomics">
        <title>The missing link: Bordetella petrii is endowed with both the metabolic versatility of environmental bacteria and virulence traits of pathogenic Bordetellae.</title>
        <authorList>
            <person name="Gross R."/>
            <person name="Guzman C.A."/>
            <person name="Sebaihia M."/>
            <person name="Martin dos Santos V.A.P."/>
            <person name="Pieper D.H."/>
            <person name="Koebnik R."/>
            <person name="Lechner M."/>
            <person name="Bartels D."/>
            <person name="Buhrmester J."/>
            <person name="Choudhuri J.V."/>
            <person name="Ebensen T."/>
            <person name="Gaigalat L."/>
            <person name="Herrmann S."/>
            <person name="Khachane A.N."/>
            <person name="Larisch C."/>
            <person name="Link S."/>
            <person name="Linke B."/>
            <person name="Meyer F."/>
            <person name="Mormann S."/>
            <person name="Nakunst D."/>
            <person name="Rueckert C."/>
            <person name="Schneiker-Bekel S."/>
            <person name="Schulze K."/>
            <person name="Voerholter F.-J."/>
            <person name="Yevsa T."/>
            <person name="Engle J.T."/>
            <person name="Goldman W.E."/>
            <person name="Puehler A."/>
            <person name="Goebel U.B."/>
            <person name="Goesmann A."/>
            <person name="Bloecker H."/>
            <person name="Kaiser O."/>
            <person name="Martinez-Arias R."/>
        </authorList>
    </citation>
    <scope>NUCLEOTIDE SEQUENCE [LARGE SCALE GENOMIC DNA]</scope>
    <source>
        <strain>ATCC BAA-461 / DSM 12804 / CCUG 43448</strain>
    </source>
</reference>
<dbReference type="EMBL" id="AM902716">
    <property type="protein sequence ID" value="CAP45288.1"/>
    <property type="molecule type" value="Genomic_DNA"/>
</dbReference>
<dbReference type="SMR" id="A9IHT5"/>
<dbReference type="STRING" id="94624.Bpet4936"/>
<dbReference type="KEGG" id="bpt:Bpet4936"/>
<dbReference type="eggNOG" id="COG0096">
    <property type="taxonomic scope" value="Bacteria"/>
</dbReference>
<dbReference type="Proteomes" id="UP000001225">
    <property type="component" value="Chromosome"/>
</dbReference>
<dbReference type="GO" id="GO:1990904">
    <property type="term" value="C:ribonucleoprotein complex"/>
    <property type="evidence" value="ECO:0007669"/>
    <property type="project" value="UniProtKB-KW"/>
</dbReference>
<dbReference type="GO" id="GO:0005840">
    <property type="term" value="C:ribosome"/>
    <property type="evidence" value="ECO:0007669"/>
    <property type="project" value="UniProtKB-KW"/>
</dbReference>
<dbReference type="GO" id="GO:0019843">
    <property type="term" value="F:rRNA binding"/>
    <property type="evidence" value="ECO:0007669"/>
    <property type="project" value="UniProtKB-UniRule"/>
</dbReference>
<dbReference type="GO" id="GO:0003735">
    <property type="term" value="F:structural constituent of ribosome"/>
    <property type="evidence" value="ECO:0007669"/>
    <property type="project" value="InterPro"/>
</dbReference>
<dbReference type="GO" id="GO:0006412">
    <property type="term" value="P:translation"/>
    <property type="evidence" value="ECO:0007669"/>
    <property type="project" value="UniProtKB-UniRule"/>
</dbReference>
<dbReference type="FunFam" id="3.30.1370.30:FF:000003">
    <property type="entry name" value="30S ribosomal protein S8"/>
    <property type="match status" value="1"/>
</dbReference>
<dbReference type="FunFam" id="3.30.1490.10:FF:000001">
    <property type="entry name" value="30S ribosomal protein S8"/>
    <property type="match status" value="1"/>
</dbReference>
<dbReference type="Gene3D" id="3.30.1370.30">
    <property type="match status" value="1"/>
</dbReference>
<dbReference type="Gene3D" id="3.30.1490.10">
    <property type="match status" value="1"/>
</dbReference>
<dbReference type="HAMAP" id="MF_01302_B">
    <property type="entry name" value="Ribosomal_uS8_B"/>
    <property type="match status" value="1"/>
</dbReference>
<dbReference type="InterPro" id="IPR000630">
    <property type="entry name" value="Ribosomal_uS8"/>
</dbReference>
<dbReference type="InterPro" id="IPR047863">
    <property type="entry name" value="Ribosomal_uS8_CS"/>
</dbReference>
<dbReference type="InterPro" id="IPR035987">
    <property type="entry name" value="Ribosomal_uS8_sf"/>
</dbReference>
<dbReference type="NCBIfam" id="NF001109">
    <property type="entry name" value="PRK00136.1"/>
    <property type="match status" value="1"/>
</dbReference>
<dbReference type="PANTHER" id="PTHR11758">
    <property type="entry name" value="40S RIBOSOMAL PROTEIN S15A"/>
    <property type="match status" value="1"/>
</dbReference>
<dbReference type="Pfam" id="PF00410">
    <property type="entry name" value="Ribosomal_S8"/>
    <property type="match status" value="1"/>
</dbReference>
<dbReference type="SUPFAM" id="SSF56047">
    <property type="entry name" value="Ribosomal protein S8"/>
    <property type="match status" value="1"/>
</dbReference>
<dbReference type="PROSITE" id="PS00053">
    <property type="entry name" value="RIBOSOMAL_S8"/>
    <property type="match status" value="1"/>
</dbReference>
<comment type="function">
    <text evidence="1">One of the primary rRNA binding proteins, it binds directly to 16S rRNA central domain where it helps coordinate assembly of the platform of the 30S subunit.</text>
</comment>
<comment type="subunit">
    <text evidence="1">Part of the 30S ribosomal subunit. Contacts proteins S5 and S12.</text>
</comment>
<comment type="similarity">
    <text evidence="1">Belongs to the universal ribosomal protein uS8 family.</text>
</comment>
<proteinExistence type="inferred from homology"/>
<accession>A9IHT5</accession>
<name>RS8_BORPD</name>
<feature type="chain" id="PRO_1000140518" description="Small ribosomal subunit protein uS8">
    <location>
        <begin position="1"/>
        <end position="131"/>
    </location>
</feature>